<name>SYS_METNO</name>
<sequence>MHDIRVIRENPAAFDEGLAKRGLEPLSAELIALDDARKAAISAAQGAQERRNALSKEIGAAKKAKDEARAQDLMAEVARLKDEAPALEAAADAAAKALDARLAAIPNTPKAEVPLGRDEHDNVEYRRFEGRGRAEAGRQHFELGEATGLMDFEAAAKLSGARFVVLKGHLARLERALGQFMLDLHTTEHGYTEVAPPLLVRDEVMFGTAQLPKFRDDQFAAMPGSVEAEGGAPTRWLIPTAEVPLTNLVRESILSEDELPLRFTALTPCFRAEAGAAGRDTRGMLRQHQFTKVELVSVTTPEQSDEEHERMLASAEAVLKKLDLPYRVVTLCTGDMGFASQKTYDIEVWLPGQGTFREISSCSVCGDFQARRMDARFRRREGRGVAHVHTLNGSGVAVGRALIAVMENYQNPDGSVTVPSALVPYMGGITRIEGPHA</sequence>
<comment type="function">
    <text evidence="1">Catalyzes the attachment of serine to tRNA(Ser). Is also able to aminoacylate tRNA(Sec) with serine, to form the misacylated tRNA L-seryl-tRNA(Sec), which will be further converted into selenocysteinyl-tRNA(Sec).</text>
</comment>
<comment type="catalytic activity">
    <reaction evidence="1">
        <text>tRNA(Ser) + L-serine + ATP = L-seryl-tRNA(Ser) + AMP + diphosphate + H(+)</text>
        <dbReference type="Rhea" id="RHEA:12292"/>
        <dbReference type="Rhea" id="RHEA-COMP:9669"/>
        <dbReference type="Rhea" id="RHEA-COMP:9703"/>
        <dbReference type="ChEBI" id="CHEBI:15378"/>
        <dbReference type="ChEBI" id="CHEBI:30616"/>
        <dbReference type="ChEBI" id="CHEBI:33019"/>
        <dbReference type="ChEBI" id="CHEBI:33384"/>
        <dbReference type="ChEBI" id="CHEBI:78442"/>
        <dbReference type="ChEBI" id="CHEBI:78533"/>
        <dbReference type="ChEBI" id="CHEBI:456215"/>
        <dbReference type="EC" id="6.1.1.11"/>
    </reaction>
</comment>
<comment type="catalytic activity">
    <reaction evidence="1">
        <text>tRNA(Sec) + L-serine + ATP = L-seryl-tRNA(Sec) + AMP + diphosphate + H(+)</text>
        <dbReference type="Rhea" id="RHEA:42580"/>
        <dbReference type="Rhea" id="RHEA-COMP:9742"/>
        <dbReference type="Rhea" id="RHEA-COMP:10128"/>
        <dbReference type="ChEBI" id="CHEBI:15378"/>
        <dbReference type="ChEBI" id="CHEBI:30616"/>
        <dbReference type="ChEBI" id="CHEBI:33019"/>
        <dbReference type="ChEBI" id="CHEBI:33384"/>
        <dbReference type="ChEBI" id="CHEBI:78442"/>
        <dbReference type="ChEBI" id="CHEBI:78533"/>
        <dbReference type="ChEBI" id="CHEBI:456215"/>
        <dbReference type="EC" id="6.1.1.11"/>
    </reaction>
</comment>
<comment type="pathway">
    <text evidence="1">Aminoacyl-tRNA biosynthesis; selenocysteinyl-tRNA(Sec) biosynthesis; L-seryl-tRNA(Sec) from L-serine and tRNA(Sec): step 1/1.</text>
</comment>
<comment type="subunit">
    <text evidence="1">Homodimer. The tRNA molecule binds across the dimer.</text>
</comment>
<comment type="subcellular location">
    <subcellularLocation>
        <location evidence="1">Cytoplasm</location>
    </subcellularLocation>
</comment>
<comment type="domain">
    <text evidence="1">Consists of two distinct domains, a catalytic core and a N-terminal extension that is involved in tRNA binding.</text>
</comment>
<comment type="similarity">
    <text evidence="1">Belongs to the class-II aminoacyl-tRNA synthetase family. Type-1 seryl-tRNA synthetase subfamily.</text>
</comment>
<dbReference type="EC" id="6.1.1.11" evidence="1"/>
<dbReference type="EMBL" id="CP001349">
    <property type="protein sequence ID" value="ACL62136.1"/>
    <property type="molecule type" value="Genomic_DNA"/>
</dbReference>
<dbReference type="RefSeq" id="WP_015933694.1">
    <property type="nucleotide sequence ID" value="NC_011894.1"/>
</dbReference>
<dbReference type="SMR" id="B8IN20"/>
<dbReference type="STRING" id="460265.Mnod_7399"/>
<dbReference type="KEGG" id="mno:Mnod_7399"/>
<dbReference type="eggNOG" id="COG0172">
    <property type="taxonomic scope" value="Bacteria"/>
</dbReference>
<dbReference type="HOGENOM" id="CLU_023797_1_1_5"/>
<dbReference type="OrthoDB" id="9804647at2"/>
<dbReference type="UniPathway" id="UPA00906">
    <property type="reaction ID" value="UER00895"/>
</dbReference>
<dbReference type="Proteomes" id="UP000008207">
    <property type="component" value="Chromosome"/>
</dbReference>
<dbReference type="GO" id="GO:0005737">
    <property type="term" value="C:cytoplasm"/>
    <property type="evidence" value="ECO:0007669"/>
    <property type="project" value="UniProtKB-SubCell"/>
</dbReference>
<dbReference type="GO" id="GO:0005524">
    <property type="term" value="F:ATP binding"/>
    <property type="evidence" value="ECO:0007669"/>
    <property type="project" value="UniProtKB-UniRule"/>
</dbReference>
<dbReference type="GO" id="GO:0004828">
    <property type="term" value="F:serine-tRNA ligase activity"/>
    <property type="evidence" value="ECO:0007669"/>
    <property type="project" value="UniProtKB-UniRule"/>
</dbReference>
<dbReference type="GO" id="GO:0016260">
    <property type="term" value="P:selenocysteine biosynthetic process"/>
    <property type="evidence" value="ECO:0007669"/>
    <property type="project" value="UniProtKB-UniRule"/>
</dbReference>
<dbReference type="GO" id="GO:0006434">
    <property type="term" value="P:seryl-tRNA aminoacylation"/>
    <property type="evidence" value="ECO:0007669"/>
    <property type="project" value="UniProtKB-UniRule"/>
</dbReference>
<dbReference type="CDD" id="cd00770">
    <property type="entry name" value="SerRS_core"/>
    <property type="match status" value="1"/>
</dbReference>
<dbReference type="Gene3D" id="3.30.930.10">
    <property type="entry name" value="Bira Bifunctional Protein, Domain 2"/>
    <property type="match status" value="1"/>
</dbReference>
<dbReference type="Gene3D" id="1.10.287.40">
    <property type="entry name" value="Serine-tRNA synthetase, tRNA binding domain"/>
    <property type="match status" value="1"/>
</dbReference>
<dbReference type="HAMAP" id="MF_00176">
    <property type="entry name" value="Ser_tRNA_synth_type1"/>
    <property type="match status" value="1"/>
</dbReference>
<dbReference type="InterPro" id="IPR002314">
    <property type="entry name" value="aa-tRNA-synt_IIb"/>
</dbReference>
<dbReference type="InterPro" id="IPR006195">
    <property type="entry name" value="aa-tRNA-synth_II"/>
</dbReference>
<dbReference type="InterPro" id="IPR045864">
    <property type="entry name" value="aa-tRNA-synth_II/BPL/LPL"/>
</dbReference>
<dbReference type="InterPro" id="IPR002317">
    <property type="entry name" value="Ser-tRNA-ligase_type_1"/>
</dbReference>
<dbReference type="InterPro" id="IPR015866">
    <property type="entry name" value="Ser-tRNA-synth_1_N"/>
</dbReference>
<dbReference type="InterPro" id="IPR042103">
    <property type="entry name" value="SerRS_1_N_sf"/>
</dbReference>
<dbReference type="InterPro" id="IPR033729">
    <property type="entry name" value="SerRS_core"/>
</dbReference>
<dbReference type="InterPro" id="IPR010978">
    <property type="entry name" value="tRNA-bd_arm"/>
</dbReference>
<dbReference type="NCBIfam" id="TIGR00414">
    <property type="entry name" value="serS"/>
    <property type="match status" value="1"/>
</dbReference>
<dbReference type="PANTHER" id="PTHR43697:SF1">
    <property type="entry name" value="SERINE--TRNA LIGASE"/>
    <property type="match status" value="1"/>
</dbReference>
<dbReference type="PANTHER" id="PTHR43697">
    <property type="entry name" value="SERYL-TRNA SYNTHETASE"/>
    <property type="match status" value="1"/>
</dbReference>
<dbReference type="Pfam" id="PF02403">
    <property type="entry name" value="Seryl_tRNA_N"/>
    <property type="match status" value="1"/>
</dbReference>
<dbReference type="Pfam" id="PF00587">
    <property type="entry name" value="tRNA-synt_2b"/>
    <property type="match status" value="1"/>
</dbReference>
<dbReference type="PIRSF" id="PIRSF001529">
    <property type="entry name" value="Ser-tRNA-synth_IIa"/>
    <property type="match status" value="1"/>
</dbReference>
<dbReference type="PRINTS" id="PR00981">
    <property type="entry name" value="TRNASYNTHSER"/>
</dbReference>
<dbReference type="SUPFAM" id="SSF55681">
    <property type="entry name" value="Class II aaRS and biotin synthetases"/>
    <property type="match status" value="1"/>
</dbReference>
<dbReference type="SUPFAM" id="SSF46589">
    <property type="entry name" value="tRNA-binding arm"/>
    <property type="match status" value="1"/>
</dbReference>
<dbReference type="PROSITE" id="PS50862">
    <property type="entry name" value="AA_TRNA_LIGASE_II"/>
    <property type="match status" value="1"/>
</dbReference>
<evidence type="ECO:0000255" key="1">
    <source>
        <dbReference type="HAMAP-Rule" id="MF_00176"/>
    </source>
</evidence>
<organism>
    <name type="scientific">Methylobacterium nodulans (strain LMG 21967 / CNCM I-2342 / ORS 2060)</name>
    <dbReference type="NCBI Taxonomy" id="460265"/>
    <lineage>
        <taxon>Bacteria</taxon>
        <taxon>Pseudomonadati</taxon>
        <taxon>Pseudomonadota</taxon>
        <taxon>Alphaproteobacteria</taxon>
        <taxon>Hyphomicrobiales</taxon>
        <taxon>Methylobacteriaceae</taxon>
        <taxon>Methylobacterium</taxon>
    </lineage>
</organism>
<keyword id="KW-0030">Aminoacyl-tRNA synthetase</keyword>
<keyword id="KW-0067">ATP-binding</keyword>
<keyword id="KW-0963">Cytoplasm</keyword>
<keyword id="KW-0436">Ligase</keyword>
<keyword id="KW-0547">Nucleotide-binding</keyword>
<keyword id="KW-0648">Protein biosynthesis</keyword>
<keyword id="KW-1185">Reference proteome</keyword>
<proteinExistence type="inferred from homology"/>
<accession>B8IN20</accession>
<reference key="1">
    <citation type="submission" date="2009-01" db="EMBL/GenBank/DDBJ databases">
        <title>Complete sequence of chromosome of Methylobacterium nodulans ORS 2060.</title>
        <authorList>
            <consortium name="US DOE Joint Genome Institute"/>
            <person name="Lucas S."/>
            <person name="Copeland A."/>
            <person name="Lapidus A."/>
            <person name="Glavina del Rio T."/>
            <person name="Dalin E."/>
            <person name="Tice H."/>
            <person name="Bruce D."/>
            <person name="Goodwin L."/>
            <person name="Pitluck S."/>
            <person name="Sims D."/>
            <person name="Brettin T."/>
            <person name="Detter J.C."/>
            <person name="Han C."/>
            <person name="Larimer F."/>
            <person name="Land M."/>
            <person name="Hauser L."/>
            <person name="Kyrpides N."/>
            <person name="Ivanova N."/>
            <person name="Marx C.J."/>
            <person name="Richardson P."/>
        </authorList>
    </citation>
    <scope>NUCLEOTIDE SEQUENCE [LARGE SCALE GENOMIC DNA]</scope>
    <source>
        <strain>LMG 21967 / CNCM I-2342 / ORS 2060</strain>
    </source>
</reference>
<gene>
    <name evidence="1" type="primary">serS</name>
    <name type="ordered locus">Mnod_7399</name>
</gene>
<feature type="chain" id="PRO_1000199492" description="Serine--tRNA ligase">
    <location>
        <begin position="1"/>
        <end position="437"/>
    </location>
</feature>
<feature type="binding site" evidence="1">
    <location>
        <begin position="240"/>
        <end position="242"/>
    </location>
    <ligand>
        <name>L-serine</name>
        <dbReference type="ChEBI" id="CHEBI:33384"/>
    </ligand>
</feature>
<feature type="binding site" evidence="1">
    <location>
        <begin position="271"/>
        <end position="273"/>
    </location>
    <ligand>
        <name>ATP</name>
        <dbReference type="ChEBI" id="CHEBI:30616"/>
    </ligand>
</feature>
<feature type="binding site" evidence="1">
    <location>
        <position position="294"/>
    </location>
    <ligand>
        <name>L-serine</name>
        <dbReference type="ChEBI" id="CHEBI:33384"/>
    </ligand>
</feature>
<feature type="binding site" evidence="1">
    <location>
        <begin position="358"/>
        <end position="361"/>
    </location>
    <ligand>
        <name>ATP</name>
        <dbReference type="ChEBI" id="CHEBI:30616"/>
    </ligand>
</feature>
<feature type="binding site" evidence="1">
    <location>
        <position position="394"/>
    </location>
    <ligand>
        <name>L-serine</name>
        <dbReference type="ChEBI" id="CHEBI:33384"/>
    </ligand>
</feature>
<protein>
    <recommendedName>
        <fullName evidence="1">Serine--tRNA ligase</fullName>
        <ecNumber evidence="1">6.1.1.11</ecNumber>
    </recommendedName>
    <alternativeName>
        <fullName evidence="1">Seryl-tRNA synthetase</fullName>
        <shortName evidence="1">SerRS</shortName>
    </alternativeName>
    <alternativeName>
        <fullName evidence="1">Seryl-tRNA(Ser/Sec) synthetase</fullName>
    </alternativeName>
</protein>